<accession>B4U2D8</accession>
<reference key="1">
    <citation type="journal article" date="2008" name="PLoS ONE">
        <title>Genome sequence of a lancefield group C Streptococcus zooepidemicus strain causing epidemic nephritis: new information about an old disease.</title>
        <authorList>
            <person name="Beres S.B."/>
            <person name="Sesso R."/>
            <person name="Pinto S.W.L."/>
            <person name="Hoe N.P."/>
            <person name="Porcella S.F."/>
            <person name="Deleo F.R."/>
            <person name="Musser J.M."/>
        </authorList>
    </citation>
    <scope>NUCLEOTIDE SEQUENCE [LARGE SCALE GENOMIC DNA]</scope>
    <source>
        <strain>MGCS10565</strain>
    </source>
</reference>
<protein>
    <recommendedName>
        <fullName evidence="1">ATP synthase subunit delta</fullName>
    </recommendedName>
    <alternativeName>
        <fullName evidence="1">ATP synthase F(1) sector subunit delta</fullName>
    </alternativeName>
    <alternativeName>
        <fullName evidence="1">F-type ATPase subunit delta</fullName>
        <shortName evidence="1">F-ATPase subunit delta</shortName>
    </alternativeName>
</protein>
<feature type="chain" id="PRO_1000184808" description="ATP synthase subunit delta">
    <location>
        <begin position="1"/>
        <end position="178"/>
    </location>
</feature>
<keyword id="KW-0066">ATP synthesis</keyword>
<keyword id="KW-1003">Cell membrane</keyword>
<keyword id="KW-0139">CF(1)</keyword>
<keyword id="KW-0375">Hydrogen ion transport</keyword>
<keyword id="KW-0406">Ion transport</keyword>
<keyword id="KW-0472">Membrane</keyword>
<keyword id="KW-0813">Transport</keyword>
<organism>
    <name type="scientific">Streptococcus equi subsp. zooepidemicus (strain MGCS10565)</name>
    <dbReference type="NCBI Taxonomy" id="552526"/>
    <lineage>
        <taxon>Bacteria</taxon>
        <taxon>Bacillati</taxon>
        <taxon>Bacillota</taxon>
        <taxon>Bacilli</taxon>
        <taxon>Lactobacillales</taxon>
        <taxon>Streptococcaceae</taxon>
        <taxon>Streptococcus</taxon>
    </lineage>
</organism>
<comment type="function">
    <text evidence="1">F(1)F(0) ATP synthase produces ATP from ADP in the presence of a proton or sodium gradient. F-type ATPases consist of two structural domains, F(1) containing the extramembraneous catalytic core and F(0) containing the membrane proton channel, linked together by a central stalk and a peripheral stalk. During catalysis, ATP synthesis in the catalytic domain of F(1) is coupled via a rotary mechanism of the central stalk subunits to proton translocation.</text>
</comment>
<comment type="function">
    <text evidence="1">This protein is part of the stalk that links CF(0) to CF(1). It either transmits conformational changes from CF(0) to CF(1) or is implicated in proton conduction.</text>
</comment>
<comment type="subunit">
    <text evidence="1">F-type ATPases have 2 components, F(1) - the catalytic core - and F(0) - the membrane proton channel. F(1) has five subunits: alpha(3), beta(3), gamma(1), delta(1), epsilon(1). F(0) has three main subunits: a(1), b(2) and c(10-14). The alpha and beta chains form an alternating ring which encloses part of the gamma chain. F(1) is attached to F(0) by a central stalk formed by the gamma and epsilon chains, while a peripheral stalk is formed by the delta and b chains.</text>
</comment>
<comment type="subcellular location">
    <subcellularLocation>
        <location evidence="1">Cell membrane</location>
        <topology evidence="1">Peripheral membrane protein</topology>
    </subcellularLocation>
</comment>
<comment type="similarity">
    <text evidence="1">Belongs to the ATPase delta chain family.</text>
</comment>
<gene>
    <name evidence="1" type="primary">atpH</name>
    <name type="ordered locus">Sez_0795</name>
</gene>
<name>ATPD_STREM</name>
<proteinExistence type="inferred from homology"/>
<sequence>MTKKEQALIEQYAKSLVQVCQERDTLEALQADVLAILEVFKATNLAKTLSSLAVPRAKKLELVRQLQGDNIIYLNNFLEVMLQNEREAYLYQVLLRVLSELASVSNQYDVTVTSAVPLSEEQKQRVRTVVSKRLAVKTGRLIEKVDPSLIGGFMISVNNKVIDTSIRRQLQAFKMNLK</sequence>
<dbReference type="EMBL" id="CP001129">
    <property type="protein sequence ID" value="ACG62155.1"/>
    <property type="molecule type" value="Genomic_DNA"/>
</dbReference>
<dbReference type="RefSeq" id="WP_012515429.1">
    <property type="nucleotide sequence ID" value="NC_011134.1"/>
</dbReference>
<dbReference type="SMR" id="B4U2D8"/>
<dbReference type="KEGG" id="sez:Sez_0795"/>
<dbReference type="HOGENOM" id="CLU_085114_1_2_9"/>
<dbReference type="Proteomes" id="UP000001873">
    <property type="component" value="Chromosome"/>
</dbReference>
<dbReference type="GO" id="GO:0005886">
    <property type="term" value="C:plasma membrane"/>
    <property type="evidence" value="ECO:0007669"/>
    <property type="project" value="UniProtKB-SubCell"/>
</dbReference>
<dbReference type="GO" id="GO:0045259">
    <property type="term" value="C:proton-transporting ATP synthase complex"/>
    <property type="evidence" value="ECO:0007669"/>
    <property type="project" value="UniProtKB-KW"/>
</dbReference>
<dbReference type="GO" id="GO:0046933">
    <property type="term" value="F:proton-transporting ATP synthase activity, rotational mechanism"/>
    <property type="evidence" value="ECO:0007669"/>
    <property type="project" value="UniProtKB-UniRule"/>
</dbReference>
<dbReference type="Gene3D" id="1.10.520.20">
    <property type="entry name" value="N-terminal domain of the delta subunit of the F1F0-ATP synthase"/>
    <property type="match status" value="1"/>
</dbReference>
<dbReference type="HAMAP" id="MF_01416">
    <property type="entry name" value="ATP_synth_delta_bact"/>
    <property type="match status" value="1"/>
</dbReference>
<dbReference type="InterPro" id="IPR026015">
    <property type="entry name" value="ATP_synth_OSCP/delta_N_sf"/>
</dbReference>
<dbReference type="InterPro" id="IPR000711">
    <property type="entry name" value="ATPase_OSCP/dsu"/>
</dbReference>
<dbReference type="NCBIfam" id="TIGR01145">
    <property type="entry name" value="ATP_synt_delta"/>
    <property type="match status" value="1"/>
</dbReference>
<dbReference type="NCBIfam" id="NF004401">
    <property type="entry name" value="PRK05758.2-1"/>
    <property type="match status" value="1"/>
</dbReference>
<dbReference type="PANTHER" id="PTHR11910">
    <property type="entry name" value="ATP SYNTHASE DELTA CHAIN"/>
    <property type="match status" value="1"/>
</dbReference>
<dbReference type="Pfam" id="PF00213">
    <property type="entry name" value="OSCP"/>
    <property type="match status" value="1"/>
</dbReference>
<dbReference type="PRINTS" id="PR00125">
    <property type="entry name" value="ATPASEDELTA"/>
</dbReference>
<dbReference type="SUPFAM" id="SSF47928">
    <property type="entry name" value="N-terminal domain of the delta subunit of the F1F0-ATP synthase"/>
    <property type="match status" value="1"/>
</dbReference>
<evidence type="ECO:0000255" key="1">
    <source>
        <dbReference type="HAMAP-Rule" id="MF_01416"/>
    </source>
</evidence>